<reference key="1">
    <citation type="journal article" date="2007" name="PLoS ONE">
        <title>A glimpse of streptococcal toxic shock syndrome from comparative genomics of S. suis 2 Chinese isolates.</title>
        <authorList>
            <person name="Chen C."/>
            <person name="Tang J."/>
            <person name="Dong W."/>
            <person name="Wang C."/>
            <person name="Feng Y."/>
            <person name="Wang J."/>
            <person name="Zheng F."/>
            <person name="Pan X."/>
            <person name="Liu D."/>
            <person name="Li M."/>
            <person name="Song Y."/>
            <person name="Zhu X."/>
            <person name="Sun H."/>
            <person name="Feng T."/>
            <person name="Guo Z."/>
            <person name="Ju A."/>
            <person name="Ge J."/>
            <person name="Dong Y."/>
            <person name="Sun W."/>
            <person name="Jiang Y."/>
            <person name="Wang J."/>
            <person name="Yan J."/>
            <person name="Yang H."/>
            <person name="Wang X."/>
            <person name="Gao G.F."/>
            <person name="Yang R."/>
            <person name="Wang J."/>
            <person name="Yu J."/>
        </authorList>
    </citation>
    <scope>NUCLEOTIDE SEQUENCE [LARGE SCALE GENOMIC DNA]</scope>
    <source>
        <strain>98HAH33</strain>
    </source>
</reference>
<organism>
    <name type="scientific">Streptococcus suis (strain 98HAH33)</name>
    <dbReference type="NCBI Taxonomy" id="391296"/>
    <lineage>
        <taxon>Bacteria</taxon>
        <taxon>Bacillati</taxon>
        <taxon>Bacillota</taxon>
        <taxon>Bacilli</taxon>
        <taxon>Lactobacillales</taxon>
        <taxon>Streptococcaceae</taxon>
        <taxon>Streptococcus</taxon>
    </lineage>
</organism>
<proteinExistence type="inferred from homology"/>
<keyword id="KW-0030">Aminoacyl-tRNA synthetase</keyword>
<keyword id="KW-0067">ATP-binding</keyword>
<keyword id="KW-0963">Cytoplasm</keyword>
<keyword id="KW-0436">Ligase</keyword>
<keyword id="KW-0547">Nucleotide-binding</keyword>
<keyword id="KW-0648">Protein biosynthesis</keyword>
<feature type="chain" id="PRO_1000018133" description="Arginine--tRNA ligase">
    <location>
        <begin position="1"/>
        <end position="562"/>
    </location>
</feature>
<feature type="short sequence motif" description="'HIGH' region">
    <location>
        <begin position="121"/>
        <end position="131"/>
    </location>
</feature>
<comment type="catalytic activity">
    <reaction evidence="1">
        <text>tRNA(Arg) + L-arginine + ATP = L-arginyl-tRNA(Arg) + AMP + diphosphate</text>
        <dbReference type="Rhea" id="RHEA:20301"/>
        <dbReference type="Rhea" id="RHEA-COMP:9658"/>
        <dbReference type="Rhea" id="RHEA-COMP:9673"/>
        <dbReference type="ChEBI" id="CHEBI:30616"/>
        <dbReference type="ChEBI" id="CHEBI:32682"/>
        <dbReference type="ChEBI" id="CHEBI:33019"/>
        <dbReference type="ChEBI" id="CHEBI:78442"/>
        <dbReference type="ChEBI" id="CHEBI:78513"/>
        <dbReference type="ChEBI" id="CHEBI:456215"/>
        <dbReference type="EC" id="6.1.1.19"/>
    </reaction>
</comment>
<comment type="subunit">
    <text evidence="1">Monomer.</text>
</comment>
<comment type="subcellular location">
    <subcellularLocation>
        <location evidence="1">Cytoplasm</location>
    </subcellularLocation>
</comment>
<comment type="similarity">
    <text evidence="1">Belongs to the class-I aminoacyl-tRNA synthetase family.</text>
</comment>
<gene>
    <name evidence="1" type="primary">argS</name>
    <name type="ordered locus">SSU98_2130</name>
</gene>
<dbReference type="EC" id="6.1.1.19" evidence="1"/>
<dbReference type="EMBL" id="CP000408">
    <property type="protein sequence ID" value="ABP93288.1"/>
    <property type="molecule type" value="Genomic_DNA"/>
</dbReference>
<dbReference type="SMR" id="A4W4J9"/>
<dbReference type="KEGG" id="ssv:SSU98_2130"/>
<dbReference type="HOGENOM" id="CLU_006406_6_2_9"/>
<dbReference type="GO" id="GO:0005737">
    <property type="term" value="C:cytoplasm"/>
    <property type="evidence" value="ECO:0007669"/>
    <property type="project" value="UniProtKB-SubCell"/>
</dbReference>
<dbReference type="GO" id="GO:0004814">
    <property type="term" value="F:arginine-tRNA ligase activity"/>
    <property type="evidence" value="ECO:0007669"/>
    <property type="project" value="UniProtKB-UniRule"/>
</dbReference>
<dbReference type="GO" id="GO:0005524">
    <property type="term" value="F:ATP binding"/>
    <property type="evidence" value="ECO:0007669"/>
    <property type="project" value="UniProtKB-UniRule"/>
</dbReference>
<dbReference type="GO" id="GO:0006420">
    <property type="term" value="P:arginyl-tRNA aminoacylation"/>
    <property type="evidence" value="ECO:0007669"/>
    <property type="project" value="UniProtKB-UniRule"/>
</dbReference>
<dbReference type="CDD" id="cd07956">
    <property type="entry name" value="Anticodon_Ia_Arg"/>
    <property type="match status" value="1"/>
</dbReference>
<dbReference type="CDD" id="cd00671">
    <property type="entry name" value="ArgRS_core"/>
    <property type="match status" value="1"/>
</dbReference>
<dbReference type="FunFam" id="3.40.50.620:FF:000116">
    <property type="entry name" value="Arginine--tRNA ligase"/>
    <property type="match status" value="1"/>
</dbReference>
<dbReference type="FunFam" id="1.10.730.10:FF:000006">
    <property type="entry name" value="Arginyl-tRNA synthetase 2, mitochondrial"/>
    <property type="match status" value="1"/>
</dbReference>
<dbReference type="Gene3D" id="3.30.1360.70">
    <property type="entry name" value="Arginyl tRNA synthetase N-terminal domain"/>
    <property type="match status" value="1"/>
</dbReference>
<dbReference type="Gene3D" id="3.40.50.620">
    <property type="entry name" value="HUPs"/>
    <property type="match status" value="1"/>
</dbReference>
<dbReference type="Gene3D" id="1.10.730.10">
    <property type="entry name" value="Isoleucyl-tRNA Synthetase, Domain 1"/>
    <property type="match status" value="1"/>
</dbReference>
<dbReference type="HAMAP" id="MF_00123">
    <property type="entry name" value="Arg_tRNA_synth"/>
    <property type="match status" value="1"/>
</dbReference>
<dbReference type="InterPro" id="IPR001278">
    <property type="entry name" value="Arg-tRNA-ligase"/>
</dbReference>
<dbReference type="InterPro" id="IPR005148">
    <property type="entry name" value="Arg-tRNA-synth_N"/>
</dbReference>
<dbReference type="InterPro" id="IPR036695">
    <property type="entry name" value="Arg-tRNA-synth_N_sf"/>
</dbReference>
<dbReference type="InterPro" id="IPR035684">
    <property type="entry name" value="ArgRS_core"/>
</dbReference>
<dbReference type="InterPro" id="IPR008909">
    <property type="entry name" value="DALR_anticod-bd"/>
</dbReference>
<dbReference type="InterPro" id="IPR014729">
    <property type="entry name" value="Rossmann-like_a/b/a_fold"/>
</dbReference>
<dbReference type="InterPro" id="IPR009080">
    <property type="entry name" value="tRNAsynth_Ia_anticodon-bd"/>
</dbReference>
<dbReference type="NCBIfam" id="TIGR00456">
    <property type="entry name" value="argS"/>
    <property type="match status" value="1"/>
</dbReference>
<dbReference type="PANTHER" id="PTHR11956:SF5">
    <property type="entry name" value="ARGININE--TRNA LIGASE, CYTOPLASMIC"/>
    <property type="match status" value="1"/>
</dbReference>
<dbReference type="PANTHER" id="PTHR11956">
    <property type="entry name" value="ARGINYL-TRNA SYNTHETASE"/>
    <property type="match status" value="1"/>
</dbReference>
<dbReference type="Pfam" id="PF03485">
    <property type="entry name" value="Arg_tRNA_synt_N"/>
    <property type="match status" value="1"/>
</dbReference>
<dbReference type="Pfam" id="PF05746">
    <property type="entry name" value="DALR_1"/>
    <property type="match status" value="1"/>
</dbReference>
<dbReference type="Pfam" id="PF00750">
    <property type="entry name" value="tRNA-synt_1d"/>
    <property type="match status" value="1"/>
</dbReference>
<dbReference type="PRINTS" id="PR01038">
    <property type="entry name" value="TRNASYNTHARG"/>
</dbReference>
<dbReference type="SMART" id="SM01016">
    <property type="entry name" value="Arg_tRNA_synt_N"/>
    <property type="match status" value="1"/>
</dbReference>
<dbReference type="SMART" id="SM00836">
    <property type="entry name" value="DALR_1"/>
    <property type="match status" value="1"/>
</dbReference>
<dbReference type="SUPFAM" id="SSF47323">
    <property type="entry name" value="Anticodon-binding domain of a subclass of class I aminoacyl-tRNA synthetases"/>
    <property type="match status" value="1"/>
</dbReference>
<dbReference type="SUPFAM" id="SSF55190">
    <property type="entry name" value="Arginyl-tRNA synthetase (ArgRS), N-terminal 'additional' domain"/>
    <property type="match status" value="1"/>
</dbReference>
<dbReference type="SUPFAM" id="SSF52374">
    <property type="entry name" value="Nucleotidylyl transferase"/>
    <property type="match status" value="1"/>
</dbReference>
<evidence type="ECO:0000255" key="1">
    <source>
        <dbReference type="HAMAP-Rule" id="MF_00123"/>
    </source>
</evidence>
<protein>
    <recommendedName>
        <fullName evidence="1">Arginine--tRNA ligase</fullName>
        <ecNumber evidence="1">6.1.1.19</ecNumber>
    </recommendedName>
    <alternativeName>
        <fullName evidence="1">Arginyl-tRNA synthetase</fullName>
        <shortName evidence="1">ArgRS</shortName>
    </alternativeName>
</protein>
<accession>A4W4J9</accession>
<sequence>MNQKQVIAERLAAILPSLEVEAIYNLLEKPKSSEMGDIAFPAFSLAKVERKAPQAIAADIVEKLDTTGFENVVATGPYVNFFLDKAAISHQVLTDVITEKDQYGKLNIGQGRNVTIDMSSPNIAKPFSVGHLRSTVIGDALANIHEKLGYKPIRINHLGDWGKQFGMLIVAYKLWGDKAAVEADPISELLKLYVRINAEAEEKPELDDEARQWFKKLEDGDPEAHELWQWFRDESLVEFNRIYDKLDVTFDSYNGEAFYNDKMDEGIQILEEKGLLQESKGAKIVDLESYNLPPALIMKTDGATLYITRDMATAMYRKRTYDFVKSIYVVGQEQINHFKQLKAVLKEMDFDWSDDMTHITFGLVTKDKKKLSTRKGNIILLEPTLDEAISRALTQIEAKNPDLENKEEVAHAVGVGAVKFYDLKTDRDNGYDFDLEAMVSFEGETGPYVQYAYARIQSILRKANFVPNAENDYKLADTESWEIIKHIQNFSAVVERAGDKFDPSLIAKYAINLAQAFNKYYAHTRILDESPERDSRLALAYATGLVLKEALRLLGVKAPEKM</sequence>
<name>SYR_STRS2</name>